<sequence length="277" mass="30391">MSSGMHVALVTGGNKGIGLAIVRDLCRLFSGDVVLTARDVARGQAAVQQLQAEGLSPRFHQLDIDDLQSIRALRDFLRKEYGGLDVLVNNAGIAFKVADPTPFHIQAEVTMKTNFFGTRDVCTELLPLIKPQGRVVNVSSIMSVRALKSCSPELQQKFRSETITEEELVGLMNKFVEDTKKGVHQKEGWPSSAYGVTKIGVTVLSRIHARKLSEQRKGDRILLNACCPGWVRTDMAGPKATKSPEEGAETPVYLALLPPDAEGPHGQFVSEKRVEQW</sequence>
<keyword id="KW-0007">Acetylation</keyword>
<keyword id="KW-0963">Cytoplasm</keyword>
<keyword id="KW-0443">Lipid metabolism</keyword>
<keyword id="KW-0521">NADP</keyword>
<keyword id="KW-0560">Oxidoreductase</keyword>
<keyword id="KW-0597">Phosphoprotein</keyword>
<keyword id="KW-1185">Reference proteome</keyword>
<gene>
    <name evidence="1" type="primary">CBR1</name>
</gene>
<name>CBR1_PONAB</name>
<reference key="1">
    <citation type="submission" date="2004-11" db="EMBL/GenBank/DDBJ databases">
        <authorList>
            <consortium name="The German cDNA consortium"/>
        </authorList>
    </citation>
    <scope>NUCLEOTIDE SEQUENCE [LARGE SCALE MRNA]</scope>
    <source>
        <tissue>Kidney</tissue>
    </source>
</reference>
<organism>
    <name type="scientific">Pongo abelii</name>
    <name type="common">Sumatran orangutan</name>
    <name type="synonym">Pongo pygmaeus abelii</name>
    <dbReference type="NCBI Taxonomy" id="9601"/>
    <lineage>
        <taxon>Eukaryota</taxon>
        <taxon>Metazoa</taxon>
        <taxon>Chordata</taxon>
        <taxon>Craniata</taxon>
        <taxon>Vertebrata</taxon>
        <taxon>Euteleostomi</taxon>
        <taxon>Mammalia</taxon>
        <taxon>Eutheria</taxon>
        <taxon>Euarchontoglires</taxon>
        <taxon>Primates</taxon>
        <taxon>Haplorrhini</taxon>
        <taxon>Catarrhini</taxon>
        <taxon>Hominidae</taxon>
        <taxon>Pongo</taxon>
    </lineage>
</organism>
<evidence type="ECO:0000250" key="1">
    <source>
        <dbReference type="UniProtKB" id="P16152"/>
    </source>
</evidence>
<evidence type="ECO:0000250" key="2">
    <source>
        <dbReference type="UniProtKB" id="P47727"/>
    </source>
</evidence>
<evidence type="ECO:0000250" key="3">
    <source>
        <dbReference type="UniProtKB" id="P48758"/>
    </source>
</evidence>
<evidence type="ECO:0000250" key="4">
    <source>
        <dbReference type="UniProtKB" id="Q28960"/>
    </source>
</evidence>
<evidence type="ECO:0000255" key="5">
    <source>
        <dbReference type="PROSITE-ProRule" id="PRU10001"/>
    </source>
</evidence>
<evidence type="ECO:0000305" key="6"/>
<dbReference type="EC" id="1.1.1.184" evidence="1"/>
<dbReference type="EC" id="1.1.1.196" evidence="4"/>
<dbReference type="EC" id="1.1.1.197" evidence="1"/>
<dbReference type="EC" id="1.1.1.71" evidence="1"/>
<dbReference type="EC" id="1.1.1.189" evidence="4"/>
<dbReference type="EMBL" id="CR858173">
    <property type="protein sequence ID" value="CAH90412.1"/>
    <property type="molecule type" value="mRNA"/>
</dbReference>
<dbReference type="RefSeq" id="NP_001125206.1">
    <property type="nucleotide sequence ID" value="NM_001131734.1"/>
</dbReference>
<dbReference type="SMR" id="Q5RCU5"/>
<dbReference type="FunCoup" id="Q5RCU5">
    <property type="interactions" value="416"/>
</dbReference>
<dbReference type="STRING" id="9601.ENSPPYP00000012724"/>
<dbReference type="GeneID" id="100172097"/>
<dbReference type="KEGG" id="pon:100172097"/>
<dbReference type="CTD" id="873"/>
<dbReference type="eggNOG" id="KOG1208">
    <property type="taxonomic scope" value="Eukaryota"/>
</dbReference>
<dbReference type="InParanoid" id="Q5RCU5"/>
<dbReference type="OrthoDB" id="7289984at2759"/>
<dbReference type="Proteomes" id="UP000001595">
    <property type="component" value="Unplaced"/>
</dbReference>
<dbReference type="GO" id="GO:0005737">
    <property type="term" value="C:cytoplasm"/>
    <property type="evidence" value="ECO:0007669"/>
    <property type="project" value="UniProtKB-SubCell"/>
</dbReference>
<dbReference type="GO" id="GO:0047021">
    <property type="term" value="F:15-hydroxyprostaglandin dehydrogenase (NADP+) activity"/>
    <property type="evidence" value="ECO:0000250"/>
    <property type="project" value="UniProtKB"/>
</dbReference>
<dbReference type="GO" id="GO:0047020">
    <property type="term" value="F:15-hydroxyprostaglandin-D dehydrogenase (NADP+) activity"/>
    <property type="evidence" value="ECO:0007669"/>
    <property type="project" value="UniProtKB-EC"/>
</dbReference>
<dbReference type="GO" id="GO:0004090">
    <property type="term" value="F:carbonyl reductase (NADPH) activity"/>
    <property type="evidence" value="ECO:0000250"/>
    <property type="project" value="UniProtKB"/>
</dbReference>
<dbReference type="GO" id="GO:0050221">
    <property type="term" value="F:prostaglandin E2 9-reductase activity"/>
    <property type="evidence" value="ECO:0000250"/>
    <property type="project" value="UniProtKB"/>
</dbReference>
<dbReference type="GO" id="GO:0160163">
    <property type="term" value="F:S-nitrosoglutathione reductase (NADPH) activity"/>
    <property type="evidence" value="ECO:0007669"/>
    <property type="project" value="RHEA"/>
</dbReference>
<dbReference type="GO" id="GO:0006629">
    <property type="term" value="P:lipid metabolic process"/>
    <property type="evidence" value="ECO:0007669"/>
    <property type="project" value="UniProtKB-KW"/>
</dbReference>
<dbReference type="GO" id="GO:0042373">
    <property type="term" value="P:vitamin K metabolic process"/>
    <property type="evidence" value="ECO:0000250"/>
    <property type="project" value="UniProtKB"/>
</dbReference>
<dbReference type="GO" id="GO:0006805">
    <property type="term" value="P:xenobiotic metabolic process"/>
    <property type="evidence" value="ECO:0000250"/>
    <property type="project" value="UniProtKB"/>
</dbReference>
<dbReference type="CDD" id="cd05324">
    <property type="entry name" value="carb_red_PTCR-like_SDR_c"/>
    <property type="match status" value="1"/>
</dbReference>
<dbReference type="FunFam" id="3.40.50.720:FF:000164">
    <property type="entry name" value="Carbonyl reductase [NADPH] 1"/>
    <property type="match status" value="1"/>
</dbReference>
<dbReference type="Gene3D" id="3.40.50.720">
    <property type="entry name" value="NAD(P)-binding Rossmann-like Domain"/>
    <property type="match status" value="1"/>
</dbReference>
<dbReference type="InterPro" id="IPR045313">
    <property type="entry name" value="CBR1-like"/>
</dbReference>
<dbReference type="InterPro" id="IPR036291">
    <property type="entry name" value="NAD(P)-bd_dom_sf"/>
</dbReference>
<dbReference type="InterPro" id="IPR020904">
    <property type="entry name" value="Sc_DH/Rdtase_CS"/>
</dbReference>
<dbReference type="InterPro" id="IPR002347">
    <property type="entry name" value="SDR_fam"/>
</dbReference>
<dbReference type="PANTHER" id="PTHR43963">
    <property type="entry name" value="CARBONYL REDUCTASE 1-RELATED"/>
    <property type="match status" value="1"/>
</dbReference>
<dbReference type="PANTHER" id="PTHR43963:SF2">
    <property type="entry name" value="CARBONYL REDUCTASE [NADPH] 1"/>
    <property type="match status" value="1"/>
</dbReference>
<dbReference type="Pfam" id="PF00106">
    <property type="entry name" value="adh_short"/>
    <property type="match status" value="1"/>
</dbReference>
<dbReference type="PRINTS" id="PR00081">
    <property type="entry name" value="GDHRDH"/>
</dbReference>
<dbReference type="PRINTS" id="PR00080">
    <property type="entry name" value="SDRFAMILY"/>
</dbReference>
<dbReference type="SUPFAM" id="SSF51735">
    <property type="entry name" value="NAD(P)-binding Rossmann-fold domains"/>
    <property type="match status" value="1"/>
</dbReference>
<dbReference type="PROSITE" id="PS00061">
    <property type="entry name" value="ADH_SHORT"/>
    <property type="match status" value="1"/>
</dbReference>
<accession>Q5RCU5</accession>
<protein>
    <recommendedName>
        <fullName evidence="6">Carbonyl reductase [NADPH] 1</fullName>
        <ecNumber evidence="1">1.1.1.184</ecNumber>
    </recommendedName>
    <alternativeName>
        <fullName>15-hydroxyprostaglandin dehydrogenase [NADP(+)]</fullName>
        <ecNumber evidence="4">1.1.1.196</ecNumber>
        <ecNumber evidence="1">1.1.1.197</ecNumber>
    </alternativeName>
    <alternativeName>
        <fullName evidence="4">20-beta-hydroxysteroid dehydrogenase</fullName>
    </alternativeName>
    <alternativeName>
        <fullName>Alcohol dehydrogenase [NAD(P)+] CBR1</fullName>
        <ecNumber evidence="1">1.1.1.71</ecNumber>
    </alternativeName>
    <alternativeName>
        <fullName>NADPH-dependent carbonyl reductase 1</fullName>
    </alternativeName>
    <alternativeName>
        <fullName evidence="4">Prostaglandin 9-ketoreductase</fullName>
        <shortName evidence="4">PG-9-KR</shortName>
    </alternativeName>
    <alternativeName>
        <fullName evidence="4">Prostaglandin-E(2) 9-reductase</fullName>
        <ecNumber evidence="4">1.1.1.189</ecNumber>
    </alternativeName>
</protein>
<comment type="function">
    <text evidence="1 4">NADPH-dependent reductase with broad substrate specificity. Catalyzes the reduction of a wide variety of carbonyl compounds including quinones, prostaglandins, menadione, plus various xenobiotics. Catalyzes the reduction of the antitumor anthracyclines doxorubicin and daunorubicin to the cardiotoxic compounds doxorubicinol and daunorubicinol (By similarity). Can convert prostaglandin E to prostaglandin F2-alpha (By similarity). Can bind glutathione, which explains its higher affinity for glutathione-conjugated substrates. Catalyzes the reduction of S-nitrosoglutathione. In addition, participates in the glucocorticoid metabolism by catalyzing the NADPH-dependent cortisol/corticosterone into 20beta-dihydrocortisol (20b-DHF) or 20beta-corticosterone (20b-DHB), which are weak agonists of NR3C1 and NR3C2 in adipose tissue (By similarity).</text>
</comment>
<comment type="catalytic activity">
    <reaction evidence="1">
        <text>a secondary alcohol + NADP(+) = a ketone + NADPH + H(+)</text>
        <dbReference type="Rhea" id="RHEA:19257"/>
        <dbReference type="ChEBI" id="CHEBI:15378"/>
        <dbReference type="ChEBI" id="CHEBI:17087"/>
        <dbReference type="ChEBI" id="CHEBI:35681"/>
        <dbReference type="ChEBI" id="CHEBI:57783"/>
        <dbReference type="ChEBI" id="CHEBI:58349"/>
        <dbReference type="EC" id="1.1.1.184"/>
    </reaction>
</comment>
<comment type="catalytic activity">
    <reaction evidence="4">
        <text>prostaglandin F2alpha + NADP(+) = prostaglandin E2 + NADPH + H(+)</text>
        <dbReference type="Rhea" id="RHEA:24508"/>
        <dbReference type="ChEBI" id="CHEBI:15378"/>
        <dbReference type="ChEBI" id="CHEBI:57404"/>
        <dbReference type="ChEBI" id="CHEBI:57783"/>
        <dbReference type="ChEBI" id="CHEBI:58349"/>
        <dbReference type="ChEBI" id="CHEBI:606564"/>
        <dbReference type="EC" id="1.1.1.189"/>
    </reaction>
    <physiologicalReaction direction="right-to-left" evidence="4">
        <dbReference type="Rhea" id="RHEA:24510"/>
    </physiologicalReaction>
</comment>
<comment type="catalytic activity">
    <reaction evidence="1">
        <text>prostaglandin E1 + NADP(+) = 15-oxoprostaglandin E1 + NADPH + H(+)</text>
        <dbReference type="Rhea" id="RHEA:11636"/>
        <dbReference type="ChEBI" id="CHEBI:15378"/>
        <dbReference type="ChEBI" id="CHEBI:57397"/>
        <dbReference type="ChEBI" id="CHEBI:57401"/>
        <dbReference type="ChEBI" id="CHEBI:57783"/>
        <dbReference type="ChEBI" id="CHEBI:58349"/>
        <dbReference type="EC" id="1.1.1.197"/>
    </reaction>
    <physiologicalReaction direction="left-to-right" evidence="1">
        <dbReference type="Rhea" id="RHEA:11637"/>
    </physiologicalReaction>
</comment>
<comment type="catalytic activity">
    <reaction evidence="1">
        <text>menadione + NADPH + H(+) = menadiol + NADP(+)</text>
        <dbReference type="Rhea" id="RHEA:63492"/>
        <dbReference type="ChEBI" id="CHEBI:6746"/>
        <dbReference type="ChEBI" id="CHEBI:15378"/>
        <dbReference type="ChEBI" id="CHEBI:28869"/>
        <dbReference type="ChEBI" id="CHEBI:57783"/>
        <dbReference type="ChEBI" id="CHEBI:58349"/>
    </reaction>
</comment>
<comment type="catalytic activity">
    <reaction evidence="4">
        <text>prostaglandin D2 + NADP(+) = 15-oxoprostaglandin D2 + NADPH + H(+)</text>
        <dbReference type="Rhea" id="RHEA:20744"/>
        <dbReference type="ChEBI" id="CHEBI:15378"/>
        <dbReference type="ChEBI" id="CHEBI:57406"/>
        <dbReference type="ChEBI" id="CHEBI:57408"/>
        <dbReference type="ChEBI" id="CHEBI:57783"/>
        <dbReference type="ChEBI" id="CHEBI:58349"/>
        <dbReference type="EC" id="1.1.1.196"/>
    </reaction>
    <physiologicalReaction direction="left-to-right" evidence="4">
        <dbReference type="Rhea" id="RHEA:20745"/>
    </physiologicalReaction>
</comment>
<comment type="catalytic activity">
    <reaction evidence="4">
        <text>prostaglandin E2 + NADP(+) = 15-oxoprostaglandin E2 + NADPH + H(+)</text>
        <dbReference type="Rhea" id="RHEA:63476"/>
        <dbReference type="ChEBI" id="CHEBI:15378"/>
        <dbReference type="ChEBI" id="CHEBI:57400"/>
        <dbReference type="ChEBI" id="CHEBI:57783"/>
        <dbReference type="ChEBI" id="CHEBI:58349"/>
        <dbReference type="ChEBI" id="CHEBI:606564"/>
    </reaction>
    <physiologicalReaction direction="left-to-right" evidence="4">
        <dbReference type="Rhea" id="RHEA:63477"/>
    </physiologicalReaction>
</comment>
<comment type="catalytic activity">
    <reaction evidence="4">
        <text>prostaglandin F2alpha + NADP(+) = 15-oxoprostaglandin F2alpha + NADPH + H(+)</text>
        <dbReference type="Rhea" id="RHEA:63480"/>
        <dbReference type="ChEBI" id="CHEBI:15378"/>
        <dbReference type="ChEBI" id="CHEBI:57404"/>
        <dbReference type="ChEBI" id="CHEBI:57783"/>
        <dbReference type="ChEBI" id="CHEBI:58349"/>
        <dbReference type="ChEBI" id="CHEBI:133409"/>
    </reaction>
    <physiologicalReaction direction="left-to-right" evidence="4">
        <dbReference type="Rhea" id="RHEA:63481"/>
    </physiologicalReaction>
</comment>
<comment type="catalytic activity">
    <reaction evidence="1">
        <text>daunorubicin + NADPH + H(+) = 13-dihydrodaunorubicin + NADP(+)</text>
        <dbReference type="Rhea" id="RHEA:63504"/>
        <dbReference type="ChEBI" id="CHEBI:15378"/>
        <dbReference type="ChEBI" id="CHEBI:57783"/>
        <dbReference type="ChEBI" id="CHEBI:58349"/>
        <dbReference type="ChEBI" id="CHEBI:64677"/>
        <dbReference type="ChEBI" id="CHEBI:75296"/>
    </reaction>
    <physiologicalReaction direction="left-to-right" evidence="1">
        <dbReference type="Rhea" id="RHEA:63505"/>
    </physiologicalReaction>
</comment>
<comment type="catalytic activity">
    <reaction evidence="4">
        <text>S-nitrosoglutathione + NADPH + H(+) = S-(hydroxysulfenamide)glutathione + NADP(+)</text>
        <dbReference type="Rhea" id="RHEA:63500"/>
        <dbReference type="ChEBI" id="CHEBI:15378"/>
        <dbReference type="ChEBI" id="CHEBI:57783"/>
        <dbReference type="ChEBI" id="CHEBI:58349"/>
        <dbReference type="ChEBI" id="CHEBI:145544"/>
        <dbReference type="ChEBI" id="CHEBI:229723"/>
    </reaction>
</comment>
<comment type="catalytic activity">
    <reaction evidence="1">
        <text>a primary alcohol + NADP(+) = an aldehyde + NADPH + H(+)</text>
        <dbReference type="Rhea" id="RHEA:15937"/>
        <dbReference type="ChEBI" id="CHEBI:15378"/>
        <dbReference type="ChEBI" id="CHEBI:15734"/>
        <dbReference type="ChEBI" id="CHEBI:17478"/>
        <dbReference type="ChEBI" id="CHEBI:57783"/>
        <dbReference type="ChEBI" id="CHEBI:58349"/>
        <dbReference type="EC" id="1.1.1.71"/>
    </reaction>
</comment>
<comment type="catalytic activity">
    <reaction evidence="1">
        <text>cortisol + NADPH + H(+) = 20beta-dihydrocortisol + NADP(+)</text>
        <dbReference type="Rhea" id="RHEA:70215"/>
        <dbReference type="ChEBI" id="CHEBI:15378"/>
        <dbReference type="ChEBI" id="CHEBI:17650"/>
        <dbReference type="ChEBI" id="CHEBI:57783"/>
        <dbReference type="ChEBI" id="CHEBI:58349"/>
        <dbReference type="ChEBI" id="CHEBI:139311"/>
    </reaction>
    <physiologicalReaction direction="left-to-right" evidence="1">
        <dbReference type="Rhea" id="RHEA:70216"/>
    </physiologicalReaction>
</comment>
<comment type="catalytic activity">
    <reaction evidence="3">
        <text>corticosterone + NADPH + H(+) = 20beta-dihydrocorticosterone + NADP(+)</text>
        <dbReference type="Rhea" id="RHEA:70219"/>
        <dbReference type="ChEBI" id="CHEBI:15378"/>
        <dbReference type="ChEBI" id="CHEBI:16827"/>
        <dbReference type="ChEBI" id="CHEBI:57783"/>
        <dbReference type="ChEBI" id="CHEBI:58349"/>
        <dbReference type="ChEBI" id="CHEBI:189050"/>
    </reaction>
    <physiologicalReaction direction="left-to-right" evidence="3">
        <dbReference type="Rhea" id="RHEA:70220"/>
    </physiologicalReaction>
</comment>
<comment type="subunit">
    <text evidence="4">Monomer.</text>
</comment>
<comment type="subcellular location">
    <subcellularLocation>
        <location evidence="4">Cytoplasm</location>
    </subcellularLocation>
</comment>
<comment type="similarity">
    <text evidence="6">Belongs to the short-chain dehydrogenases/reductases (SDR) family.</text>
</comment>
<feature type="initiator methionine" description="Removed" evidence="1">
    <location>
        <position position="1"/>
    </location>
</feature>
<feature type="chain" id="PRO_0000054605" description="Carbonyl reductase [NADPH] 1">
    <location>
        <begin position="2"/>
        <end position="277"/>
    </location>
</feature>
<feature type="active site" description="Proton acceptor" evidence="5">
    <location>
        <position position="194"/>
    </location>
</feature>
<feature type="binding site" evidence="1">
    <location>
        <begin position="10"/>
        <end position="34"/>
    </location>
    <ligand>
        <name>NADP(+)</name>
        <dbReference type="ChEBI" id="CHEBI:58349"/>
    </ligand>
</feature>
<feature type="binding site" evidence="1">
    <location>
        <begin position="63"/>
        <end position="64"/>
    </location>
    <ligand>
        <name>NADP(+)</name>
        <dbReference type="ChEBI" id="CHEBI:58349"/>
    </ligand>
</feature>
<feature type="binding site" evidence="1">
    <location>
        <position position="90"/>
    </location>
    <ligand>
        <name>NADP(+)</name>
        <dbReference type="ChEBI" id="CHEBI:58349"/>
    </ligand>
</feature>
<feature type="binding site" evidence="1">
    <location>
        <begin position="95"/>
        <end position="97"/>
    </location>
    <ligand>
        <name>glutathione</name>
        <dbReference type="ChEBI" id="CHEBI:57925"/>
    </ligand>
</feature>
<feature type="binding site" evidence="1">
    <location>
        <position position="106"/>
    </location>
    <ligand>
        <name>glutathione</name>
        <dbReference type="ChEBI" id="CHEBI:57925"/>
    </ligand>
</feature>
<feature type="binding site" evidence="1">
    <location>
        <position position="140"/>
    </location>
    <ligand>
        <name>substrate</name>
    </ligand>
</feature>
<feature type="binding site" evidence="1">
    <location>
        <begin position="193"/>
        <end position="194"/>
    </location>
    <ligand>
        <name>glutathione</name>
        <dbReference type="ChEBI" id="CHEBI:57925"/>
    </ligand>
</feature>
<feature type="binding site" evidence="1">
    <location>
        <begin position="194"/>
        <end position="198"/>
    </location>
    <ligand>
        <name>NADP(+)</name>
        <dbReference type="ChEBI" id="CHEBI:58349"/>
    </ligand>
</feature>
<feature type="binding site" evidence="1">
    <location>
        <begin position="231"/>
        <end position="233"/>
    </location>
    <ligand>
        <name>NADP(+)</name>
        <dbReference type="ChEBI" id="CHEBI:58349"/>
    </ligand>
</feature>
<feature type="modified residue" description="N-acetylserine" evidence="1">
    <location>
        <position position="2"/>
    </location>
</feature>
<feature type="modified residue" description="Phosphoserine" evidence="2">
    <location>
        <position position="2"/>
    </location>
</feature>
<feature type="modified residue" description="Phosphoserine" evidence="3">
    <location>
        <position position="30"/>
    </location>
</feature>
<feature type="modified residue" description="N6-1-carboxyethyl lysine" evidence="1">
    <location>
        <position position="239"/>
    </location>
</feature>
<proteinExistence type="evidence at transcript level"/>